<dbReference type="EC" id="3.1.22.-"/>
<dbReference type="EMBL" id="AP003259">
    <property type="protein sequence ID" value="BAC15787.1"/>
    <property type="molecule type" value="Genomic_DNA"/>
</dbReference>
<dbReference type="EMBL" id="AP008207">
    <property type="protein sequence ID" value="BAF07304.1"/>
    <property type="molecule type" value="Genomic_DNA"/>
</dbReference>
<dbReference type="EMBL" id="AP014957">
    <property type="protein sequence ID" value="BAS76212.1"/>
    <property type="molecule type" value="Genomic_DNA"/>
</dbReference>
<dbReference type="EMBL" id="CM000138">
    <property type="protein sequence ID" value="EEE55999.1"/>
    <property type="status" value="ALT_SEQ"/>
    <property type="molecule type" value="Genomic_DNA"/>
</dbReference>
<dbReference type="EMBL" id="AK111411">
    <property type="status" value="NOT_ANNOTATED_CDS"/>
    <property type="molecule type" value="mRNA"/>
</dbReference>
<dbReference type="RefSeq" id="XP_015622535.1">
    <property type="nucleotide sequence ID" value="XM_015767049.1"/>
</dbReference>
<dbReference type="SMR" id="Q8GT06"/>
<dbReference type="FunCoup" id="Q8GT06">
    <property type="interactions" value="503"/>
</dbReference>
<dbReference type="IntAct" id="Q8GT06">
    <property type="interactions" value="1"/>
</dbReference>
<dbReference type="STRING" id="39947.Q8GT06"/>
<dbReference type="iPTMnet" id="Q8GT06"/>
<dbReference type="PaxDb" id="39947-Q8GT06"/>
<dbReference type="EnsemblPlants" id="Os01t0948100-01">
    <molecule id="Q8GT06-1"/>
    <property type="protein sequence ID" value="Os01t0948100-01"/>
    <property type="gene ID" value="Os01g0948100"/>
</dbReference>
<dbReference type="Gramene" id="Os01t0948100-01">
    <molecule id="Q8GT06-1"/>
    <property type="protein sequence ID" value="Os01t0948100-01"/>
    <property type="gene ID" value="Os01g0948100"/>
</dbReference>
<dbReference type="KEGG" id="dosa:Os01g0948100"/>
<dbReference type="eggNOG" id="KOG2379">
    <property type="taxonomic scope" value="Eukaryota"/>
</dbReference>
<dbReference type="HOGENOM" id="CLU_014329_2_0_1"/>
<dbReference type="InParanoid" id="Q8GT06"/>
<dbReference type="OMA" id="ELGDAMW"/>
<dbReference type="OrthoDB" id="5963188at2759"/>
<dbReference type="Proteomes" id="UP000000763">
    <property type="component" value="Chromosome 1"/>
</dbReference>
<dbReference type="Proteomes" id="UP000007752">
    <property type="component" value="Chromosome 1"/>
</dbReference>
<dbReference type="Proteomes" id="UP000059680">
    <property type="component" value="Chromosome 1"/>
</dbReference>
<dbReference type="GO" id="GO:0048476">
    <property type="term" value="C:Holliday junction resolvase complex"/>
    <property type="evidence" value="ECO:0000318"/>
    <property type="project" value="GO_Central"/>
</dbReference>
<dbReference type="GO" id="GO:0005634">
    <property type="term" value="C:nucleus"/>
    <property type="evidence" value="ECO:0000318"/>
    <property type="project" value="GO_Central"/>
</dbReference>
<dbReference type="GO" id="GO:0048257">
    <property type="term" value="F:3'-flap endonuclease activity"/>
    <property type="evidence" value="ECO:0000318"/>
    <property type="project" value="GO_Central"/>
</dbReference>
<dbReference type="GO" id="GO:0008821">
    <property type="term" value="F:crossover junction DNA endonuclease activity"/>
    <property type="evidence" value="ECO:0007669"/>
    <property type="project" value="InterPro"/>
</dbReference>
<dbReference type="GO" id="GO:0003677">
    <property type="term" value="F:DNA binding"/>
    <property type="evidence" value="ECO:0007669"/>
    <property type="project" value="UniProtKB-KW"/>
</dbReference>
<dbReference type="GO" id="GO:0046872">
    <property type="term" value="F:metal ion binding"/>
    <property type="evidence" value="ECO:0007669"/>
    <property type="project" value="UniProtKB-KW"/>
</dbReference>
<dbReference type="GO" id="GO:0051301">
    <property type="term" value="P:cell division"/>
    <property type="evidence" value="ECO:0007669"/>
    <property type="project" value="UniProtKB-KW"/>
</dbReference>
<dbReference type="GO" id="GO:0006308">
    <property type="term" value="P:DNA catabolic process"/>
    <property type="evidence" value="ECO:0007669"/>
    <property type="project" value="InterPro"/>
</dbReference>
<dbReference type="GO" id="GO:0000727">
    <property type="term" value="P:double-strand break repair via break-induced replication"/>
    <property type="evidence" value="ECO:0000318"/>
    <property type="project" value="GO_Central"/>
</dbReference>
<dbReference type="GO" id="GO:0031573">
    <property type="term" value="P:mitotic intra-S DNA damage checkpoint signaling"/>
    <property type="evidence" value="ECO:0000318"/>
    <property type="project" value="GO_Central"/>
</dbReference>
<dbReference type="GO" id="GO:0000712">
    <property type="term" value="P:resolution of meiotic recombination intermediates"/>
    <property type="evidence" value="ECO:0000318"/>
    <property type="project" value="GO_Central"/>
</dbReference>
<dbReference type="CDD" id="cd21036">
    <property type="entry name" value="WH_MUS81"/>
    <property type="match status" value="1"/>
</dbReference>
<dbReference type="CDD" id="cd20074">
    <property type="entry name" value="XPF_nuclease_Mus81"/>
    <property type="match status" value="1"/>
</dbReference>
<dbReference type="FunFam" id="1.10.10.10:FF:000307">
    <property type="entry name" value="Crossover junction endonuclease MUS81"/>
    <property type="match status" value="1"/>
</dbReference>
<dbReference type="FunFam" id="1.10.150.670:FF:000003">
    <property type="entry name" value="Crossover junction endonuclease MUS81"/>
    <property type="match status" value="1"/>
</dbReference>
<dbReference type="FunFam" id="3.40.50.10130:FF:000005">
    <property type="entry name" value="crossover junction endonuclease MUS81 isoform X1"/>
    <property type="match status" value="1"/>
</dbReference>
<dbReference type="Gene3D" id="3.40.50.10130">
    <property type="match status" value="1"/>
</dbReference>
<dbReference type="Gene3D" id="1.10.150.670">
    <property type="entry name" value="Crossover junction endonuclease EME1, DNA-binding domain"/>
    <property type="match status" value="1"/>
</dbReference>
<dbReference type="Gene3D" id="1.10.10.10">
    <property type="entry name" value="Winged helix-like DNA-binding domain superfamily/Winged helix DNA-binding domain"/>
    <property type="match status" value="1"/>
</dbReference>
<dbReference type="InterPro" id="IPR042530">
    <property type="entry name" value="EME1/EME2_C"/>
</dbReference>
<dbReference type="InterPro" id="IPR006166">
    <property type="entry name" value="ERCC4_domain"/>
</dbReference>
<dbReference type="InterPro" id="IPR033309">
    <property type="entry name" value="Mus81"/>
</dbReference>
<dbReference type="InterPro" id="IPR011335">
    <property type="entry name" value="Restrct_endonuc-II-like"/>
</dbReference>
<dbReference type="InterPro" id="IPR036388">
    <property type="entry name" value="WH-like_DNA-bd_sf"/>
</dbReference>
<dbReference type="InterPro" id="IPR047417">
    <property type="entry name" value="WH_MUS81"/>
</dbReference>
<dbReference type="InterPro" id="IPR047416">
    <property type="entry name" value="XPF_nuclease_Mus81"/>
</dbReference>
<dbReference type="PANTHER" id="PTHR13451">
    <property type="entry name" value="CLASS II CROSSOVER JUNCTION ENDONUCLEASE MUS81"/>
    <property type="match status" value="1"/>
</dbReference>
<dbReference type="PANTHER" id="PTHR13451:SF0">
    <property type="entry name" value="CROSSOVER JUNCTION ENDONUCLEASE MUS81"/>
    <property type="match status" value="1"/>
</dbReference>
<dbReference type="Pfam" id="PF02732">
    <property type="entry name" value="ERCC4"/>
    <property type="match status" value="1"/>
</dbReference>
<dbReference type="Pfam" id="PF21136">
    <property type="entry name" value="MUS81-like_WH"/>
    <property type="match status" value="1"/>
</dbReference>
<dbReference type="SMART" id="SM00891">
    <property type="entry name" value="ERCC4"/>
    <property type="match status" value="1"/>
</dbReference>
<dbReference type="SUPFAM" id="SSF52980">
    <property type="entry name" value="Restriction endonuclease-like"/>
    <property type="match status" value="1"/>
</dbReference>
<feature type="chain" id="PRO_0000418425" description="Crossover junction endonuclease MUS81">
    <location>
        <begin position="1"/>
        <end position="660"/>
    </location>
</feature>
<feature type="domain" description="ERCC4">
    <location>
        <begin position="411"/>
        <end position="506"/>
    </location>
</feature>
<feature type="region of interest" description="Disordered" evidence="2">
    <location>
        <begin position="82"/>
        <end position="109"/>
    </location>
</feature>
<feature type="short sequence motif" description="Helix-hairpin-helix motif 1">
    <location>
        <begin position="62"/>
        <end position="81"/>
    </location>
</feature>
<feature type="short sequence motif" description="Helix-hairpin-helix motif 2">
    <location>
        <begin position="586"/>
        <end position="623"/>
    </location>
</feature>
<feature type="compositionally biased region" description="Low complexity" evidence="2">
    <location>
        <begin position="82"/>
        <end position="98"/>
    </location>
</feature>
<feature type="splice variant" id="VSP_044049" description="In isoform 2." evidence="4">
    <original>VR</original>
    <variation>FA</variation>
    <location>
        <begin position="541"/>
        <end position="542"/>
    </location>
</feature>
<feature type="splice variant" id="VSP_044050" description="In isoform 2." evidence="4">
    <location>
        <begin position="543"/>
        <end position="660"/>
    </location>
</feature>
<feature type="sequence conflict" description="In Ref. 7; AK111411." evidence="4" ref="7">
    <original>P</original>
    <variation>S</variation>
    <location>
        <position position="269"/>
    </location>
</feature>
<sequence>MAPEARQLKVHLRENEAVAQCVLEKWRSMEEKPGGLKENLAHTLYKSYRNVCAAKEPIRSLKDLYQIKGVGKWVIRQLKGSFPESSPDLSPPESNAAGEKGKKAGGSKRYVPQKNSAAYAILITLHRETINGKSHMKKQELIDATEASGLSRSAIGPDKSKAKPGAFASSQKDWYTGWSCMKTLTSKGLVAKSGNPAKYMITEEGKSTALECLSRSGLDDHAAPLVINSAPDTSNASHKLNNICMTSFVETSSGPSRAIGRPKTSIANPATKTSPEVTYLTSQESLNYNSDVRTAENCAEEIILSDSDSEELYTENYPLIGSEEFTERVAPPILNASNSGKTTTNYRFSDCSASISPRSSEGTFEMQSSSTMGIAEFNMLDNDTVCMDNSILAMPPRRSSKNFLEDYEVVLILDDRENFGGRSRKTVDNIHSQFRVPVEIKHLPVGDGIWIARDRKLHTEYVLDFIVERKNVADLCSSITDNRYKDQKLRLKKCGLRKLIYLVEGDPNPLDTSERIKTACFTTEILEGFDVQRTPGYAETVRTYGNLTHSITEYYSTHFSTGANTSQVCLTYDEFTKKCDDLKKITVSDVFALQLMQVPQVTEEAALAVIGLYPTLFSLAKAYSMLDGDTHAQEKMLKNKSTLINAGASRNIFKLVWAEG</sequence>
<evidence type="ECO:0000250" key="1"/>
<evidence type="ECO:0000256" key="2">
    <source>
        <dbReference type="SAM" id="MobiDB-lite"/>
    </source>
</evidence>
<evidence type="ECO:0000269" key="3">
    <source>
    </source>
</evidence>
<evidence type="ECO:0000305" key="4"/>
<keyword id="KW-0025">Alternative splicing</keyword>
<keyword id="KW-0106">Calcium</keyword>
<keyword id="KW-0131">Cell cycle</keyword>
<keyword id="KW-0132">Cell division</keyword>
<keyword id="KW-0227">DNA damage</keyword>
<keyword id="KW-0233">DNA recombination</keyword>
<keyword id="KW-0234">DNA repair</keyword>
<keyword id="KW-0238">DNA-binding</keyword>
<keyword id="KW-0255">Endonuclease</keyword>
<keyword id="KW-0378">Hydrolase</keyword>
<keyword id="KW-0460">Magnesium</keyword>
<keyword id="KW-0469">Meiosis</keyword>
<keyword id="KW-0479">Metal-binding</keyword>
<keyword id="KW-0498">Mitosis</keyword>
<keyword id="KW-0540">Nuclease</keyword>
<keyword id="KW-0539">Nucleus</keyword>
<keyword id="KW-1185">Reference proteome</keyword>
<keyword id="KW-0677">Repeat</keyword>
<accession>Q8GT06</accession>
<accession>A0A0P0VCV7</accession>
<accession>B9EWF8</accession>
<comment type="function">
    <text evidence="1">Interacts with EME1 to form a DNA structure-specific endonuclease with substrate preference for branched DNA structures with a 5'-end at the branch nick. Typical substrates include 3'-flap structures, D-loops, replication forks, nicked Holliday junctions and also intact Holliday junctions with a reduced efficiency. May be required in mitosis for the processing of stalled or collapsed replication fork intermediates. Plays a role in DNA repair and in genotoxic stress-induced homologous recombination (HR) in somatic cells. Mediates a subset of meiotic recombination events that are insensitive to crossover interference (By similarity).</text>
</comment>
<comment type="cofactor">
    <cofactor evidence="1">
        <name>Mg(2+)</name>
        <dbReference type="ChEBI" id="CHEBI:18420"/>
    </cofactor>
    <cofactor evidence="1">
        <name>Ca(2+)</name>
        <dbReference type="ChEBI" id="CHEBI:29108"/>
    </cofactor>
</comment>
<comment type="subunit">
    <text evidence="1 3">Forms a heterodimer with EME1 (By similarity). Interacts with RAD54.</text>
</comment>
<comment type="subcellular location">
    <subcellularLocation>
        <location evidence="1">Nucleus</location>
    </subcellularLocation>
</comment>
<comment type="alternative products">
    <event type="alternative splicing"/>
    <isoform>
        <id>Q8GT06-1</id>
        <name>1</name>
        <name>Alpha</name>
        <sequence type="displayed"/>
    </isoform>
    <isoform>
        <id>Q8GT06-2</id>
        <name>2</name>
        <name>Beta</name>
        <sequence type="described" ref="VSP_044049 VSP_044050"/>
    </isoform>
</comment>
<comment type="tissue specificity">
    <text evidence="3">Low expression in shoots and roots from etiolated seedlings, and panicles after meiosis; moderate expression in young panicles under differentiation of floral organs before and during meiosis; and high expression in mature leaves.</text>
</comment>
<comment type="induction">
    <text evidence="3">By DNA-damaging treatments such as high intensity light, UV-C and gamma-radiation.</text>
</comment>
<comment type="similarity">
    <text evidence="4">Belongs to the XPF family.</text>
</comment>
<comment type="sequence caution" evidence="4">
    <conflict type="erroneous gene model prediction">
        <sequence resource="EMBL-CDS" id="EEE55999"/>
    </conflict>
</comment>
<protein>
    <recommendedName>
        <fullName>Crossover junction endonuclease MUS81</fullName>
        <ecNumber>3.1.22.-</ecNumber>
    </recommendedName>
    <alternativeName>
        <fullName>Protein MMS AND UV SENSITIVE 81</fullName>
        <shortName>OsMUS81</shortName>
    </alternativeName>
</protein>
<name>MUS81_ORYSJ</name>
<organism>
    <name type="scientific">Oryza sativa subsp. japonica</name>
    <name type="common">Rice</name>
    <dbReference type="NCBI Taxonomy" id="39947"/>
    <lineage>
        <taxon>Eukaryota</taxon>
        <taxon>Viridiplantae</taxon>
        <taxon>Streptophyta</taxon>
        <taxon>Embryophyta</taxon>
        <taxon>Tracheophyta</taxon>
        <taxon>Spermatophyta</taxon>
        <taxon>Magnoliopsida</taxon>
        <taxon>Liliopsida</taxon>
        <taxon>Poales</taxon>
        <taxon>Poaceae</taxon>
        <taxon>BOP clade</taxon>
        <taxon>Oryzoideae</taxon>
        <taxon>Oryzeae</taxon>
        <taxon>Oryzinae</taxon>
        <taxon>Oryza</taxon>
        <taxon>Oryza sativa</taxon>
    </lineage>
</organism>
<reference key="1">
    <citation type="journal article" date="2007" name="Plant Cell Physiol.">
        <title>Two alternatively spliced transcripts generated from OsMUS81, a rice homolog of yeast MUS81, are up-regulated by DNA-damaging treatments.</title>
        <authorList>
            <person name="Mimida N."/>
            <person name="Kitamoto H."/>
            <person name="Osakabe K."/>
            <person name="Nakashima M."/>
            <person name="Ito Y."/>
            <person name="Heyer W.D."/>
            <person name="Toki S."/>
            <person name="Ichikawa H."/>
        </authorList>
    </citation>
    <scope>NUCLEOTIDE SEQUENCE [MRNA]</scope>
    <scope>ALTERNATIVE SPLICING</scope>
    <scope>H-H-H MOTIF</scope>
    <scope>INTERACTION WITH RAD54</scope>
    <scope>TISSUE SPECIFICITY</scope>
    <scope>INDUCTION</scope>
    <source>
        <strain>cv. Nipponbare</strain>
    </source>
</reference>
<reference key="2">
    <citation type="journal article" date="2002" name="Nature">
        <title>The genome sequence and structure of rice chromosome 1.</title>
        <authorList>
            <person name="Sasaki T."/>
            <person name="Matsumoto T."/>
            <person name="Yamamoto K."/>
            <person name="Sakata K."/>
            <person name="Baba T."/>
            <person name="Katayose Y."/>
            <person name="Wu J."/>
            <person name="Niimura Y."/>
            <person name="Cheng Z."/>
            <person name="Nagamura Y."/>
            <person name="Antonio B.A."/>
            <person name="Kanamori H."/>
            <person name="Hosokawa S."/>
            <person name="Masukawa M."/>
            <person name="Arikawa K."/>
            <person name="Chiden Y."/>
            <person name="Hayashi M."/>
            <person name="Okamoto M."/>
            <person name="Ando T."/>
            <person name="Aoki H."/>
            <person name="Arita K."/>
            <person name="Hamada M."/>
            <person name="Harada C."/>
            <person name="Hijishita S."/>
            <person name="Honda M."/>
            <person name="Ichikawa Y."/>
            <person name="Idonuma A."/>
            <person name="Iijima M."/>
            <person name="Ikeda M."/>
            <person name="Ikeno M."/>
            <person name="Ito S."/>
            <person name="Ito T."/>
            <person name="Ito Y."/>
            <person name="Ito Y."/>
            <person name="Iwabuchi A."/>
            <person name="Kamiya K."/>
            <person name="Karasawa W."/>
            <person name="Katagiri S."/>
            <person name="Kikuta A."/>
            <person name="Kobayashi N."/>
            <person name="Kono I."/>
            <person name="Machita K."/>
            <person name="Maehara T."/>
            <person name="Mizuno H."/>
            <person name="Mizubayashi T."/>
            <person name="Mukai Y."/>
            <person name="Nagasaki H."/>
            <person name="Nakashima M."/>
            <person name="Nakama Y."/>
            <person name="Nakamichi Y."/>
            <person name="Nakamura M."/>
            <person name="Namiki N."/>
            <person name="Negishi M."/>
            <person name="Ohta I."/>
            <person name="Ono N."/>
            <person name="Saji S."/>
            <person name="Sakai K."/>
            <person name="Shibata M."/>
            <person name="Shimokawa T."/>
            <person name="Shomura A."/>
            <person name="Song J."/>
            <person name="Takazaki Y."/>
            <person name="Terasawa K."/>
            <person name="Tsuji K."/>
            <person name="Waki K."/>
            <person name="Yamagata H."/>
            <person name="Yamane H."/>
            <person name="Yoshiki S."/>
            <person name="Yoshihara R."/>
            <person name="Yukawa K."/>
            <person name="Zhong H."/>
            <person name="Iwama H."/>
            <person name="Endo T."/>
            <person name="Ito H."/>
            <person name="Hahn J.H."/>
            <person name="Kim H.-I."/>
            <person name="Eun M.-Y."/>
            <person name="Yano M."/>
            <person name="Jiang J."/>
            <person name="Gojobori T."/>
        </authorList>
    </citation>
    <scope>NUCLEOTIDE SEQUENCE [LARGE SCALE GENOMIC DNA]</scope>
    <source>
        <strain>cv. Nipponbare</strain>
    </source>
</reference>
<reference key="3">
    <citation type="journal article" date="2005" name="Nature">
        <title>The map-based sequence of the rice genome.</title>
        <authorList>
            <consortium name="International rice genome sequencing project (IRGSP)"/>
        </authorList>
    </citation>
    <scope>NUCLEOTIDE SEQUENCE [LARGE SCALE GENOMIC DNA]</scope>
    <source>
        <strain>cv. Nipponbare</strain>
    </source>
</reference>
<reference key="4">
    <citation type="journal article" date="2008" name="Nucleic Acids Res.">
        <title>The rice annotation project database (RAP-DB): 2008 update.</title>
        <authorList>
            <consortium name="The rice annotation project (RAP)"/>
        </authorList>
    </citation>
    <scope>GENOME REANNOTATION</scope>
    <source>
        <strain>cv. Nipponbare</strain>
    </source>
</reference>
<reference key="5">
    <citation type="journal article" date="2013" name="Rice">
        <title>Improvement of the Oryza sativa Nipponbare reference genome using next generation sequence and optical map data.</title>
        <authorList>
            <person name="Kawahara Y."/>
            <person name="de la Bastide M."/>
            <person name="Hamilton J.P."/>
            <person name="Kanamori H."/>
            <person name="McCombie W.R."/>
            <person name="Ouyang S."/>
            <person name="Schwartz D.C."/>
            <person name="Tanaka T."/>
            <person name="Wu J."/>
            <person name="Zhou S."/>
            <person name="Childs K.L."/>
            <person name="Davidson R.M."/>
            <person name="Lin H."/>
            <person name="Quesada-Ocampo L."/>
            <person name="Vaillancourt B."/>
            <person name="Sakai H."/>
            <person name="Lee S.S."/>
            <person name="Kim J."/>
            <person name="Numa H."/>
            <person name="Itoh T."/>
            <person name="Buell C.R."/>
            <person name="Matsumoto T."/>
        </authorList>
    </citation>
    <scope>GENOME REANNOTATION</scope>
    <source>
        <strain>cv. Nipponbare</strain>
    </source>
</reference>
<reference key="6">
    <citation type="journal article" date="2005" name="PLoS Biol.">
        <title>The genomes of Oryza sativa: a history of duplications.</title>
        <authorList>
            <person name="Yu J."/>
            <person name="Wang J."/>
            <person name="Lin W."/>
            <person name="Li S."/>
            <person name="Li H."/>
            <person name="Zhou J."/>
            <person name="Ni P."/>
            <person name="Dong W."/>
            <person name="Hu S."/>
            <person name="Zeng C."/>
            <person name="Zhang J."/>
            <person name="Zhang Y."/>
            <person name="Li R."/>
            <person name="Xu Z."/>
            <person name="Li S."/>
            <person name="Li X."/>
            <person name="Zheng H."/>
            <person name="Cong L."/>
            <person name="Lin L."/>
            <person name="Yin J."/>
            <person name="Geng J."/>
            <person name="Li G."/>
            <person name="Shi J."/>
            <person name="Liu J."/>
            <person name="Lv H."/>
            <person name="Li J."/>
            <person name="Wang J."/>
            <person name="Deng Y."/>
            <person name="Ran L."/>
            <person name="Shi X."/>
            <person name="Wang X."/>
            <person name="Wu Q."/>
            <person name="Li C."/>
            <person name="Ren X."/>
            <person name="Wang J."/>
            <person name="Wang X."/>
            <person name="Li D."/>
            <person name="Liu D."/>
            <person name="Zhang X."/>
            <person name="Ji Z."/>
            <person name="Zhao W."/>
            <person name="Sun Y."/>
            <person name="Zhang Z."/>
            <person name="Bao J."/>
            <person name="Han Y."/>
            <person name="Dong L."/>
            <person name="Ji J."/>
            <person name="Chen P."/>
            <person name="Wu S."/>
            <person name="Liu J."/>
            <person name="Xiao Y."/>
            <person name="Bu D."/>
            <person name="Tan J."/>
            <person name="Yang L."/>
            <person name="Ye C."/>
            <person name="Zhang J."/>
            <person name="Xu J."/>
            <person name="Zhou Y."/>
            <person name="Yu Y."/>
            <person name="Zhang B."/>
            <person name="Zhuang S."/>
            <person name="Wei H."/>
            <person name="Liu B."/>
            <person name="Lei M."/>
            <person name="Yu H."/>
            <person name="Li Y."/>
            <person name="Xu H."/>
            <person name="Wei S."/>
            <person name="He X."/>
            <person name="Fang L."/>
            <person name="Zhang Z."/>
            <person name="Zhang Y."/>
            <person name="Huang X."/>
            <person name="Su Z."/>
            <person name="Tong W."/>
            <person name="Li J."/>
            <person name="Tong Z."/>
            <person name="Li S."/>
            <person name="Ye J."/>
            <person name="Wang L."/>
            <person name="Fang L."/>
            <person name="Lei T."/>
            <person name="Chen C.-S."/>
            <person name="Chen H.-C."/>
            <person name="Xu Z."/>
            <person name="Li H."/>
            <person name="Huang H."/>
            <person name="Zhang F."/>
            <person name="Xu H."/>
            <person name="Li N."/>
            <person name="Zhao C."/>
            <person name="Li S."/>
            <person name="Dong L."/>
            <person name="Huang Y."/>
            <person name="Li L."/>
            <person name="Xi Y."/>
            <person name="Qi Q."/>
            <person name="Li W."/>
            <person name="Zhang B."/>
            <person name="Hu W."/>
            <person name="Zhang Y."/>
            <person name="Tian X."/>
            <person name="Jiao Y."/>
            <person name="Liang X."/>
            <person name="Jin J."/>
            <person name="Gao L."/>
            <person name="Zheng W."/>
            <person name="Hao B."/>
            <person name="Liu S.-M."/>
            <person name="Wang W."/>
            <person name="Yuan L."/>
            <person name="Cao M."/>
            <person name="McDermott J."/>
            <person name="Samudrala R."/>
            <person name="Wang J."/>
            <person name="Wong G.K.-S."/>
            <person name="Yang H."/>
        </authorList>
    </citation>
    <scope>NUCLEOTIDE SEQUENCE [LARGE SCALE GENOMIC DNA]</scope>
    <source>
        <strain>cv. Nipponbare</strain>
    </source>
</reference>
<reference key="7">
    <citation type="journal article" date="2003" name="Science">
        <title>Collection, mapping, and annotation of over 28,000 cDNA clones from japonica rice.</title>
        <authorList>
            <consortium name="The rice full-length cDNA consortium"/>
        </authorList>
    </citation>
    <scope>NUCLEOTIDE SEQUENCE [LARGE SCALE MRNA]</scope>
    <source>
        <strain>cv. Nipponbare</strain>
    </source>
</reference>
<gene>
    <name type="primary">MUS81</name>
    <name type="ordered locus">Os01g0948100</name>
    <name type="ordered locus">LOC_Os01g71960</name>
    <name type="ORF">OsJ_04752</name>
    <name type="ORF">P0466H10.31</name>
</gene>
<proteinExistence type="evidence at protein level"/>